<gene>
    <name evidence="1" type="primary">rpoC</name>
    <name type="ordered locus">cbdbA587</name>
</gene>
<proteinExistence type="inferred from homology"/>
<dbReference type="EC" id="2.7.7.6" evidence="1"/>
<dbReference type="EMBL" id="AJ965256">
    <property type="protein sequence ID" value="CAI82767.1"/>
    <property type="molecule type" value="Genomic_DNA"/>
</dbReference>
<dbReference type="RefSeq" id="WP_011309118.1">
    <property type="nucleotide sequence ID" value="NC_007356.1"/>
</dbReference>
<dbReference type="SMR" id="Q3ZX00"/>
<dbReference type="KEGG" id="deh:cbdbA587"/>
<dbReference type="HOGENOM" id="CLU_000524_3_1_0"/>
<dbReference type="Proteomes" id="UP000000433">
    <property type="component" value="Chromosome"/>
</dbReference>
<dbReference type="GO" id="GO:0000428">
    <property type="term" value="C:DNA-directed RNA polymerase complex"/>
    <property type="evidence" value="ECO:0007669"/>
    <property type="project" value="UniProtKB-KW"/>
</dbReference>
<dbReference type="GO" id="GO:0003677">
    <property type="term" value="F:DNA binding"/>
    <property type="evidence" value="ECO:0007669"/>
    <property type="project" value="UniProtKB-UniRule"/>
</dbReference>
<dbReference type="GO" id="GO:0003899">
    <property type="term" value="F:DNA-directed RNA polymerase activity"/>
    <property type="evidence" value="ECO:0007669"/>
    <property type="project" value="UniProtKB-UniRule"/>
</dbReference>
<dbReference type="GO" id="GO:0000287">
    <property type="term" value="F:magnesium ion binding"/>
    <property type="evidence" value="ECO:0007669"/>
    <property type="project" value="UniProtKB-UniRule"/>
</dbReference>
<dbReference type="GO" id="GO:0008270">
    <property type="term" value="F:zinc ion binding"/>
    <property type="evidence" value="ECO:0007669"/>
    <property type="project" value="UniProtKB-UniRule"/>
</dbReference>
<dbReference type="GO" id="GO:0006351">
    <property type="term" value="P:DNA-templated transcription"/>
    <property type="evidence" value="ECO:0007669"/>
    <property type="project" value="UniProtKB-UniRule"/>
</dbReference>
<dbReference type="CDD" id="cd02655">
    <property type="entry name" value="RNAP_beta'_C"/>
    <property type="match status" value="1"/>
</dbReference>
<dbReference type="CDD" id="cd01609">
    <property type="entry name" value="RNAP_beta'_N"/>
    <property type="match status" value="1"/>
</dbReference>
<dbReference type="FunFam" id="4.10.860.120:FF:000001">
    <property type="entry name" value="DNA-directed RNA polymerase subunit beta"/>
    <property type="match status" value="1"/>
</dbReference>
<dbReference type="Gene3D" id="1.10.132.30">
    <property type="match status" value="1"/>
</dbReference>
<dbReference type="Gene3D" id="1.10.150.390">
    <property type="match status" value="1"/>
</dbReference>
<dbReference type="Gene3D" id="1.10.1790.20">
    <property type="match status" value="1"/>
</dbReference>
<dbReference type="Gene3D" id="1.10.40.90">
    <property type="match status" value="1"/>
</dbReference>
<dbReference type="Gene3D" id="2.40.40.20">
    <property type="match status" value="1"/>
</dbReference>
<dbReference type="Gene3D" id="2.40.50.100">
    <property type="match status" value="2"/>
</dbReference>
<dbReference type="Gene3D" id="4.10.860.120">
    <property type="entry name" value="RNA polymerase II, clamp domain"/>
    <property type="match status" value="1"/>
</dbReference>
<dbReference type="Gene3D" id="1.10.274.100">
    <property type="entry name" value="RNA polymerase Rpb1, domain 3"/>
    <property type="match status" value="2"/>
</dbReference>
<dbReference type="HAMAP" id="MF_01322">
    <property type="entry name" value="RNApol_bact_RpoC"/>
    <property type="match status" value="1"/>
</dbReference>
<dbReference type="InterPro" id="IPR045867">
    <property type="entry name" value="DNA-dir_RpoC_beta_prime"/>
</dbReference>
<dbReference type="InterPro" id="IPR012754">
    <property type="entry name" value="DNA-dir_RpoC_beta_prime_bact"/>
</dbReference>
<dbReference type="InterPro" id="IPR000722">
    <property type="entry name" value="RNA_pol_asu"/>
</dbReference>
<dbReference type="InterPro" id="IPR006592">
    <property type="entry name" value="RNA_pol_N"/>
</dbReference>
<dbReference type="InterPro" id="IPR007080">
    <property type="entry name" value="RNA_pol_Rpb1_1"/>
</dbReference>
<dbReference type="InterPro" id="IPR007066">
    <property type="entry name" value="RNA_pol_Rpb1_3"/>
</dbReference>
<dbReference type="InterPro" id="IPR042102">
    <property type="entry name" value="RNA_pol_Rpb1_3_sf"/>
</dbReference>
<dbReference type="InterPro" id="IPR007083">
    <property type="entry name" value="RNA_pol_Rpb1_4"/>
</dbReference>
<dbReference type="InterPro" id="IPR007081">
    <property type="entry name" value="RNA_pol_Rpb1_5"/>
</dbReference>
<dbReference type="InterPro" id="IPR044893">
    <property type="entry name" value="RNA_pol_Rpb1_clamp_domain"/>
</dbReference>
<dbReference type="InterPro" id="IPR038120">
    <property type="entry name" value="Rpb1_funnel_sf"/>
</dbReference>
<dbReference type="InterPro" id="IPR011054">
    <property type="entry name" value="Rudment_hybrid_motif"/>
</dbReference>
<dbReference type="NCBIfam" id="TIGR02386">
    <property type="entry name" value="rpoC_TIGR"/>
    <property type="match status" value="1"/>
</dbReference>
<dbReference type="PANTHER" id="PTHR19376">
    <property type="entry name" value="DNA-DIRECTED RNA POLYMERASE"/>
    <property type="match status" value="1"/>
</dbReference>
<dbReference type="PANTHER" id="PTHR19376:SF54">
    <property type="entry name" value="DNA-DIRECTED RNA POLYMERASE SUBUNIT BETA"/>
    <property type="match status" value="1"/>
</dbReference>
<dbReference type="Pfam" id="PF04997">
    <property type="entry name" value="RNA_pol_Rpb1_1"/>
    <property type="match status" value="1"/>
</dbReference>
<dbReference type="Pfam" id="PF00623">
    <property type="entry name" value="RNA_pol_Rpb1_2"/>
    <property type="match status" value="2"/>
</dbReference>
<dbReference type="Pfam" id="PF04983">
    <property type="entry name" value="RNA_pol_Rpb1_3"/>
    <property type="match status" value="1"/>
</dbReference>
<dbReference type="Pfam" id="PF05000">
    <property type="entry name" value="RNA_pol_Rpb1_4"/>
    <property type="match status" value="1"/>
</dbReference>
<dbReference type="Pfam" id="PF04998">
    <property type="entry name" value="RNA_pol_Rpb1_5"/>
    <property type="match status" value="1"/>
</dbReference>
<dbReference type="SMART" id="SM00663">
    <property type="entry name" value="RPOLA_N"/>
    <property type="match status" value="1"/>
</dbReference>
<dbReference type="SUPFAM" id="SSF64484">
    <property type="entry name" value="beta and beta-prime subunits of DNA dependent RNA-polymerase"/>
    <property type="match status" value="1"/>
</dbReference>
<dbReference type="SUPFAM" id="SSF51246">
    <property type="entry name" value="Rudiment single hybrid motif"/>
    <property type="match status" value="1"/>
</dbReference>
<name>RPOC_DEHMC</name>
<protein>
    <recommendedName>
        <fullName evidence="1">DNA-directed RNA polymerase subunit beta'</fullName>
        <shortName evidence="1">RNAP subunit beta'</shortName>
        <ecNumber evidence="1">2.7.7.6</ecNumber>
    </recommendedName>
    <alternativeName>
        <fullName evidence="1">RNA polymerase subunit beta'</fullName>
    </alternativeName>
    <alternativeName>
        <fullName evidence="1">Transcriptase subunit beta'</fullName>
    </alternativeName>
</protein>
<reference key="1">
    <citation type="journal article" date="2005" name="Nat. Biotechnol.">
        <title>Genome sequence of the chlorinated compound-respiring bacterium Dehalococcoides species strain CBDB1.</title>
        <authorList>
            <person name="Kube M."/>
            <person name="Beck A."/>
            <person name="Zinder S.H."/>
            <person name="Kuhl H."/>
            <person name="Reinhardt R."/>
            <person name="Adrian L."/>
        </authorList>
    </citation>
    <scope>NUCLEOTIDE SEQUENCE [LARGE SCALE GENOMIC DNA]</scope>
    <source>
        <strain>CBDB1</strain>
    </source>
</reference>
<comment type="function">
    <text evidence="1">DNA-dependent RNA polymerase catalyzes the transcription of DNA into RNA using the four ribonucleoside triphosphates as substrates.</text>
</comment>
<comment type="catalytic activity">
    <reaction evidence="1">
        <text>RNA(n) + a ribonucleoside 5'-triphosphate = RNA(n+1) + diphosphate</text>
        <dbReference type="Rhea" id="RHEA:21248"/>
        <dbReference type="Rhea" id="RHEA-COMP:14527"/>
        <dbReference type="Rhea" id="RHEA-COMP:17342"/>
        <dbReference type="ChEBI" id="CHEBI:33019"/>
        <dbReference type="ChEBI" id="CHEBI:61557"/>
        <dbReference type="ChEBI" id="CHEBI:140395"/>
        <dbReference type="EC" id="2.7.7.6"/>
    </reaction>
</comment>
<comment type="cofactor">
    <cofactor evidence="1">
        <name>Mg(2+)</name>
        <dbReference type="ChEBI" id="CHEBI:18420"/>
    </cofactor>
    <text evidence="1">Binds 1 Mg(2+) ion per subunit.</text>
</comment>
<comment type="cofactor">
    <cofactor evidence="1">
        <name>Zn(2+)</name>
        <dbReference type="ChEBI" id="CHEBI:29105"/>
    </cofactor>
    <text evidence="1">Binds 2 Zn(2+) ions per subunit.</text>
</comment>
<comment type="subunit">
    <text evidence="1">The RNAP catalytic core consists of 2 alpha, 1 beta, 1 beta' and 1 omega subunit. When a sigma factor is associated with the core the holoenzyme is formed, which can initiate transcription.</text>
</comment>
<comment type="similarity">
    <text evidence="1">Belongs to the RNA polymerase beta' chain family.</text>
</comment>
<keyword id="KW-0240">DNA-directed RNA polymerase</keyword>
<keyword id="KW-0460">Magnesium</keyword>
<keyword id="KW-0479">Metal-binding</keyword>
<keyword id="KW-0548">Nucleotidyltransferase</keyword>
<keyword id="KW-0804">Transcription</keyword>
<keyword id="KW-0808">Transferase</keyword>
<keyword id="KW-0862">Zinc</keyword>
<evidence type="ECO:0000255" key="1">
    <source>
        <dbReference type="HAMAP-Rule" id="MF_01322"/>
    </source>
</evidence>
<sequence length="1295" mass="144317">MNEVNDFDAIRISLASPDQIRSWSYGEVTKPETINYRTLKPERDGLFCERIFGPIKDFECACGKYKRIRYKGIICDKCGVEIARAKVRRERMGHIELACPVGHIWFTRGIPSRVGLLLNLSTRSLERIIYYSHFIITAVNDDAREKAIKDLEVISSQRVADKGSEVDTRVAQMEAEDATVEAINQIRRDFSTEREQMEEDIQLLIDQLKDLQKGNLLTENQYYELKQRFSNVFEASMGAEALLKLLSYIDMDKERSKLIQETRSTSGQRRKKAGKQLQLVEAFRRSSNKPEWMIMTVLPVLPPDLRPMVQLDGGRFATSDLNDLYRRVINRNNRLQHLMEIGAPEIIIRNEKRMLQEAVDSLIDNGRRGKSVAVNGDHKAKSLSDLLRGKQGRFRQNLLGKRVDYSGRSVIVVGPSLKLSQCGLPRRMALELFKPFVMHRLVRDGLAPNIKSARRLVERARPEVYDILEEVVKDRPVLLNRAPTLHRLSIQAFEPVLIDGSALRLHPLVCSAFNADFDGDQMAVHVPLSKAAVKEARETMLSIHNMMLPSSGEPVVSPSLDMVFGCYYLTTTRPGAKGEGKIFGDFEEAKRYYEMGIIDLRAIIKVRDGKGNMLETTTGRIIFNDVLPKAVEFQNMDIPKSAIKKIIGRCYKILSSQDMAVMLDKIKELGFKFATSSGISIAMSDISVPREKTKLVAAADERTAIAEGQFARGLITEDERYNSIIETWMETTDRITDAIQAGFDKQGSVYMMANSGAKGNISQIRQMAGLRGLMTNPSGRIIDFPIKSSLREGLTALEYFISTHGARKGLADTALRTSGSGYLTRRLIDVTQDVIILQEDCGTANGTWIIEPKEKGMLPPLVDRILGRWTAHNVVHPQTGEIIVDNNEEIDEIKAKAIGEAGITEVFVRSPLTCESTHGMCRRCYGRDLGRVRLVDMNTAVGIIAAQSIGEPGTQLTLRTFHTGGVVGVDITTGLPRVEELFEARPPKVQSIISEIDGVVEVIENENGRHIRIASDEVYQDEYELPSGWKTQVQSRQWVDSGMVLASPELEGKSKAVVQSDQNVVARVAGEVTVEGNLITIKYSESEEREYTIPAAMQIKVKTGDTIRAGQQLTDGSINPQDILSILGRDAVQKYLVEEVQKVYYSQGVHINDKHIEVIARQMLIKVRIDSSGDTDLVPGELVDKFRYEDINAKVLAEGGEPATAHTVLMGITRASLSTESWLAAASFQETTRVLTDAAIYGRVDKLSGLKENVIIGKLIPAQCKSCKEATIERAERIAAAASAPAMSGLPENCL</sequence>
<organism>
    <name type="scientific">Dehalococcoides mccartyi (strain CBDB1)</name>
    <dbReference type="NCBI Taxonomy" id="255470"/>
    <lineage>
        <taxon>Bacteria</taxon>
        <taxon>Bacillati</taxon>
        <taxon>Chloroflexota</taxon>
        <taxon>Dehalococcoidia</taxon>
        <taxon>Dehalococcoidales</taxon>
        <taxon>Dehalococcoidaceae</taxon>
        <taxon>Dehalococcoides</taxon>
    </lineage>
</organism>
<accession>Q3ZX00</accession>
<feature type="chain" id="PRO_0000225530" description="DNA-directed RNA polymerase subunit beta'">
    <location>
        <begin position="1"/>
        <end position="1295"/>
    </location>
</feature>
<feature type="binding site" evidence="1">
    <location>
        <position position="60"/>
    </location>
    <ligand>
        <name>Zn(2+)</name>
        <dbReference type="ChEBI" id="CHEBI:29105"/>
        <label>1</label>
    </ligand>
</feature>
<feature type="binding site" evidence="1">
    <location>
        <position position="62"/>
    </location>
    <ligand>
        <name>Zn(2+)</name>
        <dbReference type="ChEBI" id="CHEBI:29105"/>
        <label>1</label>
    </ligand>
</feature>
<feature type="binding site" evidence="1">
    <location>
        <position position="75"/>
    </location>
    <ligand>
        <name>Zn(2+)</name>
        <dbReference type="ChEBI" id="CHEBI:29105"/>
        <label>1</label>
    </ligand>
</feature>
<feature type="binding site" evidence="1">
    <location>
        <position position="78"/>
    </location>
    <ligand>
        <name>Zn(2+)</name>
        <dbReference type="ChEBI" id="CHEBI:29105"/>
        <label>1</label>
    </ligand>
</feature>
<feature type="binding site" evidence="1">
    <location>
        <position position="516"/>
    </location>
    <ligand>
        <name>Mg(2+)</name>
        <dbReference type="ChEBI" id="CHEBI:18420"/>
    </ligand>
</feature>
<feature type="binding site" evidence="1">
    <location>
        <position position="518"/>
    </location>
    <ligand>
        <name>Mg(2+)</name>
        <dbReference type="ChEBI" id="CHEBI:18420"/>
    </ligand>
</feature>
<feature type="binding site" evidence="1">
    <location>
        <position position="520"/>
    </location>
    <ligand>
        <name>Mg(2+)</name>
        <dbReference type="ChEBI" id="CHEBI:18420"/>
    </ligand>
</feature>
<feature type="binding site" evidence="1">
    <location>
        <position position="841"/>
    </location>
    <ligand>
        <name>Zn(2+)</name>
        <dbReference type="ChEBI" id="CHEBI:29105"/>
        <label>2</label>
    </ligand>
</feature>
<feature type="binding site" evidence="1">
    <location>
        <position position="914"/>
    </location>
    <ligand>
        <name>Zn(2+)</name>
        <dbReference type="ChEBI" id="CHEBI:29105"/>
        <label>2</label>
    </ligand>
</feature>
<feature type="binding site" evidence="1">
    <location>
        <position position="921"/>
    </location>
    <ligand>
        <name>Zn(2+)</name>
        <dbReference type="ChEBI" id="CHEBI:29105"/>
        <label>2</label>
    </ligand>
</feature>
<feature type="binding site" evidence="1">
    <location>
        <position position="924"/>
    </location>
    <ligand>
        <name>Zn(2+)</name>
        <dbReference type="ChEBI" id="CHEBI:29105"/>
        <label>2</label>
    </ligand>
</feature>